<comment type="function">
    <text evidence="1">Part of the ProU ABC transporter complex involved in glycine betaine and proline betaine uptake. Probably responsible for energy coupling to the transport system.</text>
</comment>
<comment type="subunit">
    <text evidence="1">The complex is composed of two ATP-binding proteins (ProV), two transmembrane proteins (ProW) and a solute-binding protein (ProX).</text>
</comment>
<comment type="subcellular location">
    <subcellularLocation>
        <location evidence="1">Cell inner membrane</location>
        <topology evidence="1">Peripheral membrane protein</topology>
    </subcellularLocation>
</comment>
<comment type="induction">
    <text evidence="4">Induced in response to increased extracellular osmolarity, this is the first gene of the proU operon (proV-proW-proX). Osmoregulation requires curved DNA downstream of the transcription start site in this gene, which is repressed when bound by H-NS. H-NS may act indirectly to influence the local topology of the promoter (PubMed:1423593).</text>
</comment>
<comment type="similarity">
    <text evidence="6">Belongs to the ABC transporter superfamily.</text>
</comment>
<accession>P17328</accession>
<sequence>MAIKLEVKNLYKIFGEHPQRAFKYIEKGLSKEQILEKTGLSLGVKDASLAIEEGEIFVIMGLSGSGKSTMVRLLNRLIEPTRGQVLIDGVDIAKISDAELREVRRKKIAMVFQSFALMPHMTVLDNTAFGMELAGIAAQERREKALDALRQVGLENYAHAYPDELSGGMRQRVGLARALAINPDILLMDEAFSALDPLIRTEMQDELVKLQAKHQRTIVFISHDLDEAMRIGDRIAIMQNGEVVQVGTPDEILNNPANDYVRTFFRGVDISQVFSAKDIARRSPVGLIRKTPGFGPRSALKLLQDEDREYGYVIERGNKFVGVVSIDSLKAALSQAQGIEAALIDDPLVVDAQTPLSELLSHVGQAPCAVPVVDEEHQYVGIISKRMLLQALDREGGNNG</sequence>
<organism>
    <name type="scientific">Salmonella typhimurium (strain LT2 / SGSC1412 / ATCC 700720)</name>
    <dbReference type="NCBI Taxonomy" id="99287"/>
    <lineage>
        <taxon>Bacteria</taxon>
        <taxon>Pseudomonadati</taxon>
        <taxon>Pseudomonadota</taxon>
        <taxon>Gammaproteobacteria</taxon>
        <taxon>Enterobacterales</taxon>
        <taxon>Enterobacteriaceae</taxon>
        <taxon>Salmonella</taxon>
    </lineage>
</organism>
<name>PROV_SALTY</name>
<evidence type="ECO:0000250" key="1">
    <source>
        <dbReference type="UniProtKB" id="P14175"/>
    </source>
</evidence>
<evidence type="ECO:0000255" key="2">
    <source>
        <dbReference type="PROSITE-ProRule" id="PRU00434"/>
    </source>
</evidence>
<evidence type="ECO:0000255" key="3">
    <source>
        <dbReference type="PROSITE-ProRule" id="PRU00703"/>
    </source>
</evidence>
<evidence type="ECO:0000269" key="4">
    <source>
    </source>
</evidence>
<evidence type="ECO:0000303" key="5">
    <source>
    </source>
</evidence>
<evidence type="ECO:0000305" key="6"/>
<feature type="chain" id="PRO_0000092762" description="Glycine betaine/proline betaine transport system ATP-binding protein ProV">
    <location>
        <begin position="1"/>
        <end position="400"/>
    </location>
</feature>
<feature type="domain" description="ABC transporter" evidence="2">
    <location>
        <begin position="29"/>
        <end position="265"/>
    </location>
</feature>
<feature type="domain" description="CBS 1" evidence="3">
    <location>
        <begin position="280"/>
        <end position="341"/>
    </location>
</feature>
<feature type="domain" description="CBS 2" evidence="3">
    <location>
        <begin position="343"/>
        <end position="400"/>
    </location>
</feature>
<feature type="binding site" evidence="2">
    <location>
        <begin position="61"/>
        <end position="68"/>
    </location>
    <ligand>
        <name>ATP</name>
        <dbReference type="ChEBI" id="CHEBI:30616"/>
    </ligand>
</feature>
<feature type="sequence conflict" description="In Ref. 1; CAA36921." evidence="6" ref="1">
    <original>A</original>
    <variation>R</variation>
    <location>
        <position position="158"/>
    </location>
</feature>
<keyword id="KW-0029">Amino-acid transport</keyword>
<keyword id="KW-0067">ATP-binding</keyword>
<keyword id="KW-0129">CBS domain</keyword>
<keyword id="KW-0997">Cell inner membrane</keyword>
<keyword id="KW-1003">Cell membrane</keyword>
<keyword id="KW-0472">Membrane</keyword>
<keyword id="KW-0547">Nucleotide-binding</keyword>
<keyword id="KW-1185">Reference proteome</keyword>
<keyword id="KW-0677">Repeat</keyword>
<keyword id="KW-0813">Transport</keyword>
<proteinExistence type="evidence at transcript level"/>
<reference key="1">
    <citation type="journal article" date="1989" name="Mol. Microbiol.">
        <title>Molecular characterization of the proU loci of Salmonella typhimurium and Escherichia coli encoding osmoregulated glycine betaine transport systems.</title>
        <authorList>
            <person name="Stirling D.A."/>
            <person name="Hulton C.S.J."/>
            <person name="Waddell L."/>
            <person name="Park S.F."/>
            <person name="Stewart G.S.A.B."/>
            <person name="Booth I.R."/>
            <person name="Higgins C.F."/>
        </authorList>
    </citation>
    <scope>NUCLEOTIDE SEQUENCE [GENOMIC DNA]</scope>
    <source>
        <strain>LT2</strain>
    </source>
</reference>
<reference key="2">
    <citation type="journal article" date="2001" name="Nature">
        <title>Complete genome sequence of Salmonella enterica serovar Typhimurium LT2.</title>
        <authorList>
            <person name="McClelland M."/>
            <person name="Sanderson K.E."/>
            <person name="Spieth J."/>
            <person name="Clifton S.W."/>
            <person name="Latreille P."/>
            <person name="Courtney L."/>
            <person name="Porwollik S."/>
            <person name="Ali J."/>
            <person name="Dante M."/>
            <person name="Du F."/>
            <person name="Hou S."/>
            <person name="Layman D."/>
            <person name="Leonard S."/>
            <person name="Nguyen C."/>
            <person name="Scott K."/>
            <person name="Holmes A."/>
            <person name="Grewal N."/>
            <person name="Mulvaney E."/>
            <person name="Ryan E."/>
            <person name="Sun H."/>
            <person name="Florea L."/>
            <person name="Miller W."/>
            <person name="Stoneking T."/>
            <person name="Nhan M."/>
            <person name="Waterston R."/>
            <person name="Wilson R.K."/>
        </authorList>
    </citation>
    <scope>NUCLEOTIDE SEQUENCE [LARGE SCALE GENOMIC DNA]</scope>
    <source>
        <strain>LT2 / SGSC1412 / ATCC 700720</strain>
    </source>
</reference>
<reference key="3">
    <citation type="journal article" date="1989" name="J. Bacteriol.">
        <title>Nucleotide sequence of the transcriptional control region of the osmotically regulated proU operon of Salmonella typhimurium and identification of the 5' endpoint of the proU mRNA.</title>
        <authorList>
            <person name="Overdier D.G."/>
            <person name="Olson E.R."/>
            <person name="Erickson B.D."/>
            <person name="Ederer M.M."/>
            <person name="Csonka L.N."/>
        </authorList>
    </citation>
    <scope>NUCLEOTIDE SEQUENCE [GENOMIC DNA] OF 1-291</scope>
</reference>
<reference key="4">
    <citation type="journal article" date="1994" name="J. Bacteriol.">
        <title>Cloning and sequencing of the genes from Salmonella typhimurium encoding a new bacterial ribonucleotide reductase.</title>
        <authorList>
            <person name="Jordan A."/>
            <person name="Gibert I."/>
            <person name="Barbe J."/>
        </authorList>
    </citation>
    <scope>NUCLEOTIDE SEQUENCE [GENOMIC DNA] OF 1-196</scope>
</reference>
<reference key="5">
    <citation type="journal article" date="1992" name="Cell">
        <title>The chromatin-associated protein H-NS interacts with curved DNA to influence DNA topology and gene expression.</title>
        <authorList>
            <person name="Owen-Hughes T.A."/>
            <person name="Pavitt G.D."/>
            <person name="Santos D.S."/>
            <person name="Sidebotham J.M."/>
            <person name="Hulton C.S."/>
            <person name="Hinton J.C."/>
            <person name="Higgins C.F."/>
        </authorList>
    </citation>
    <scope>INDUCTION</scope>
    <source>
        <strain>LT2 / SGSC1412 / ATCC 700720</strain>
    </source>
</reference>
<dbReference type="EMBL" id="X52693">
    <property type="protein sequence ID" value="CAA36921.1"/>
    <property type="molecule type" value="Genomic_DNA"/>
</dbReference>
<dbReference type="EMBL" id="AE006468">
    <property type="protein sequence ID" value="AAL21694.1"/>
    <property type="molecule type" value="Genomic_DNA"/>
</dbReference>
<dbReference type="EMBL" id="M26063">
    <property type="protein sequence ID" value="AAA88621.1"/>
    <property type="molecule type" value="Genomic_DNA"/>
</dbReference>
<dbReference type="EMBL" id="X73226">
    <property type="protein sequence ID" value="CAA51696.1"/>
    <property type="molecule type" value="Genomic_DNA"/>
</dbReference>
<dbReference type="PIR" id="S05374">
    <property type="entry name" value="QREBVT"/>
</dbReference>
<dbReference type="RefSeq" id="NP_461735.1">
    <property type="nucleotide sequence ID" value="NC_003197.2"/>
</dbReference>
<dbReference type="RefSeq" id="WP_000985529.1">
    <property type="nucleotide sequence ID" value="NC_003197.2"/>
</dbReference>
<dbReference type="SMR" id="P17328"/>
<dbReference type="STRING" id="99287.STM2809"/>
<dbReference type="PaxDb" id="99287-STM2809"/>
<dbReference type="GeneID" id="1254332"/>
<dbReference type="KEGG" id="stm:STM2809"/>
<dbReference type="PATRIC" id="fig|99287.12.peg.2967"/>
<dbReference type="HOGENOM" id="CLU_000604_2_2_6"/>
<dbReference type="OMA" id="GQIFVVM"/>
<dbReference type="PhylomeDB" id="P17328"/>
<dbReference type="BioCyc" id="SENT99287:STM2809-MONOMER"/>
<dbReference type="Proteomes" id="UP000001014">
    <property type="component" value="Chromosome"/>
</dbReference>
<dbReference type="GO" id="GO:0005886">
    <property type="term" value="C:plasma membrane"/>
    <property type="evidence" value="ECO:0007669"/>
    <property type="project" value="UniProtKB-SubCell"/>
</dbReference>
<dbReference type="GO" id="GO:0005524">
    <property type="term" value="F:ATP binding"/>
    <property type="evidence" value="ECO:0007669"/>
    <property type="project" value="UniProtKB-KW"/>
</dbReference>
<dbReference type="GO" id="GO:0016887">
    <property type="term" value="F:ATP hydrolysis activity"/>
    <property type="evidence" value="ECO:0007669"/>
    <property type="project" value="InterPro"/>
</dbReference>
<dbReference type="GO" id="GO:0006865">
    <property type="term" value="P:amino acid transport"/>
    <property type="evidence" value="ECO:0007669"/>
    <property type="project" value="UniProtKB-KW"/>
</dbReference>
<dbReference type="GO" id="GO:0071470">
    <property type="term" value="P:cellular response to osmotic stress"/>
    <property type="evidence" value="ECO:0000314"/>
    <property type="project" value="UniProtKB"/>
</dbReference>
<dbReference type="GO" id="GO:0031460">
    <property type="term" value="P:glycine betaine transport"/>
    <property type="evidence" value="ECO:0007669"/>
    <property type="project" value="InterPro"/>
</dbReference>
<dbReference type="CDD" id="cd03294">
    <property type="entry name" value="ABC_Pro_Gly_Betaine"/>
    <property type="match status" value="1"/>
</dbReference>
<dbReference type="CDD" id="cd09831">
    <property type="entry name" value="CBS_pair_ABC_Gly_Pro_assoc"/>
    <property type="match status" value="1"/>
</dbReference>
<dbReference type="FunFam" id="3.10.580.10:FF:000009">
    <property type="entry name" value="Glycine betaine/L-proline ABC transporter ATP-binding protein"/>
    <property type="match status" value="1"/>
</dbReference>
<dbReference type="FunFam" id="3.40.50.300:FF:000201">
    <property type="entry name" value="Glycine betaine/L-proline ABC transporter ATP-binding protein"/>
    <property type="match status" value="1"/>
</dbReference>
<dbReference type="Gene3D" id="3.10.580.10">
    <property type="entry name" value="CBS-domain"/>
    <property type="match status" value="1"/>
</dbReference>
<dbReference type="Gene3D" id="3.40.50.300">
    <property type="entry name" value="P-loop containing nucleotide triphosphate hydrolases"/>
    <property type="match status" value="1"/>
</dbReference>
<dbReference type="InterPro" id="IPR003593">
    <property type="entry name" value="AAA+_ATPase"/>
</dbReference>
<dbReference type="InterPro" id="IPR051921">
    <property type="entry name" value="ABC_osmolyte_uptake_ATP-bind"/>
</dbReference>
<dbReference type="InterPro" id="IPR003439">
    <property type="entry name" value="ABC_transporter-like_ATP-bd"/>
</dbReference>
<dbReference type="InterPro" id="IPR017871">
    <property type="entry name" value="ABC_transporter-like_CS"/>
</dbReference>
<dbReference type="InterPro" id="IPR000644">
    <property type="entry name" value="CBS_dom"/>
</dbReference>
<dbReference type="InterPro" id="IPR046342">
    <property type="entry name" value="CBS_dom_sf"/>
</dbReference>
<dbReference type="InterPro" id="IPR005892">
    <property type="entry name" value="Gly-betaine_transp_ATP-bd"/>
</dbReference>
<dbReference type="InterPro" id="IPR027417">
    <property type="entry name" value="P-loop_NTPase"/>
</dbReference>
<dbReference type="NCBIfam" id="NF007480">
    <property type="entry name" value="PRK10070.1"/>
    <property type="match status" value="1"/>
</dbReference>
<dbReference type="NCBIfam" id="TIGR01186">
    <property type="entry name" value="proV"/>
    <property type="match status" value="1"/>
</dbReference>
<dbReference type="PANTHER" id="PTHR43869">
    <property type="entry name" value="GLYCINE BETAINE/PROLINE BETAINE TRANSPORT SYSTEM ATP-BINDING PROTEIN PROV"/>
    <property type="match status" value="1"/>
</dbReference>
<dbReference type="PANTHER" id="PTHR43869:SF1">
    <property type="entry name" value="GLYCINE BETAINE_PROLINE BETAINE TRANSPORT SYSTEM ATP-BINDING PROTEIN PROV"/>
    <property type="match status" value="1"/>
</dbReference>
<dbReference type="Pfam" id="PF00005">
    <property type="entry name" value="ABC_tran"/>
    <property type="match status" value="1"/>
</dbReference>
<dbReference type="Pfam" id="PF00571">
    <property type="entry name" value="CBS"/>
    <property type="match status" value="1"/>
</dbReference>
<dbReference type="SMART" id="SM00382">
    <property type="entry name" value="AAA"/>
    <property type="match status" value="1"/>
</dbReference>
<dbReference type="SUPFAM" id="SSF54631">
    <property type="entry name" value="CBS-domain pair"/>
    <property type="match status" value="1"/>
</dbReference>
<dbReference type="SUPFAM" id="SSF52540">
    <property type="entry name" value="P-loop containing nucleoside triphosphate hydrolases"/>
    <property type="match status" value="1"/>
</dbReference>
<dbReference type="PROSITE" id="PS00211">
    <property type="entry name" value="ABC_TRANSPORTER_1"/>
    <property type="match status" value="1"/>
</dbReference>
<dbReference type="PROSITE" id="PS50893">
    <property type="entry name" value="ABC_TRANSPORTER_2"/>
    <property type="match status" value="1"/>
</dbReference>
<dbReference type="PROSITE" id="PS51371">
    <property type="entry name" value="CBS"/>
    <property type="match status" value="2"/>
</dbReference>
<gene>
    <name evidence="5" type="primary">proV</name>
    <name type="ordered locus">STM2809</name>
</gene>
<protein>
    <recommendedName>
        <fullName evidence="1">Glycine betaine/proline betaine transport system ATP-binding protein ProV</fullName>
    </recommendedName>
</protein>